<name>SOXA_PSESE</name>
<accession>Q9K4M4</accession>
<sequence>MTVSKRFLAPVFAMVGGLVLAFSANADPVDEELVIDDIPMVTRAAAPEGHPFDEGLSGWLFREAETRETEADSFANPGMLAVERGADIWNTVEGSAGKSCASCHDDAATSMKNVGAQYPKWDADAKRPINIELQIDKCRVENMGAEPYKFDAEGQVALTSYIKHQSLGTPVKMDLSDGELQDWWEKGKELYYTRTGQLNFACASCHEDSMGKYIRADHLSQGQANGFPTYRFNTGGMVSLHNRFRGCIRDTRAEMPKAFSDELMALEVYVTWRGTGLSVETPAVRQ</sequence>
<gene>
    <name evidence="7" type="primary">soxA</name>
</gene>
<reference evidence="6 7" key="1">
    <citation type="journal article" date="2000" name="J. Bacteriol.">
        <title>A soxA gene, encoding a diheme cytochrome c, and a sox locus, essential for sulfur oxidation in a new sulfur lithotrophic bacterium.</title>
        <authorList>
            <person name="Mukhopadhyaya P.N."/>
            <person name="Deb C."/>
            <person name="Lahiri C."/>
            <person name="Roy P."/>
        </authorList>
    </citation>
    <scope>NUCLEOTIDE SEQUENCE [GENOMIC DNA]</scope>
    <scope>FUNCTION</scope>
    <scope>CATALYTIC ACTIVITY</scope>
    <scope>INDUCTION BY THIOSULFATE</scope>
    <scope>DISRUPTION PHENOTYPE</scope>
    <source>
        <strain evidence="7">KCT001</strain>
    </source>
</reference>
<feature type="signal peptide" evidence="3">
    <location>
        <begin position="1"/>
        <end position="26"/>
    </location>
</feature>
<feature type="chain" id="PRO_5000067909" description="L-cysteine S-thiosulfotransferase subunit SoxA">
    <location>
        <begin position="27"/>
        <end position="286"/>
    </location>
</feature>
<feature type="domain" description="Cytochrome c" evidence="3">
    <location>
        <begin position="80"/>
        <end position="166"/>
    </location>
</feature>
<feature type="active site" description="Cysteine persulfide intermediate" evidence="2">
    <location>
        <position position="247"/>
    </location>
</feature>
<feature type="binding site" description="covalent" evidence="2">
    <location>
        <position position="100"/>
    </location>
    <ligand>
        <name>heme</name>
        <dbReference type="ChEBI" id="CHEBI:30413"/>
        <label>1</label>
    </ligand>
</feature>
<feature type="binding site" description="covalent" evidence="2">
    <location>
        <position position="103"/>
    </location>
    <ligand>
        <name>heme</name>
        <dbReference type="ChEBI" id="CHEBI:30413"/>
        <label>1</label>
    </ligand>
</feature>
<feature type="binding site" description="axial binding residue" evidence="2">
    <location>
        <position position="104"/>
    </location>
    <ligand>
        <name>heme</name>
        <dbReference type="ChEBI" id="CHEBI:30413"/>
        <label>1</label>
    </ligand>
    <ligandPart>
        <name>Fe</name>
        <dbReference type="ChEBI" id="CHEBI:18248"/>
    </ligandPart>
</feature>
<feature type="binding site" description="axial binding residue" evidence="2">
    <location>
        <position position="138"/>
    </location>
    <ligand>
        <name>heme</name>
        <dbReference type="ChEBI" id="CHEBI:30413"/>
        <label>1</label>
    </ligand>
    <ligandPart>
        <name>Fe</name>
        <dbReference type="ChEBI" id="CHEBI:18248"/>
    </ligandPart>
</feature>
<feature type="binding site" description="covalent" evidence="2">
    <location>
        <position position="202"/>
    </location>
    <ligand>
        <name>heme</name>
        <dbReference type="ChEBI" id="CHEBI:30413"/>
        <label>2</label>
    </ligand>
</feature>
<feature type="binding site" description="covalent" evidence="2">
    <location>
        <position position="205"/>
    </location>
    <ligand>
        <name>heme</name>
        <dbReference type="ChEBI" id="CHEBI:30413"/>
        <label>2</label>
    </ligand>
</feature>
<feature type="binding site" description="axial binding residue" evidence="2">
    <location>
        <position position="206"/>
    </location>
    <ligand>
        <name>heme</name>
        <dbReference type="ChEBI" id="CHEBI:30413"/>
        <label>2</label>
    </ligand>
    <ligandPart>
        <name>Fe</name>
        <dbReference type="ChEBI" id="CHEBI:18248"/>
    </ligandPart>
</feature>
<feature type="binding site" evidence="2">
    <location>
        <position position="243"/>
    </location>
    <ligand>
        <name>substrate</name>
    </ligand>
</feature>
<feature type="binding site" description="axial binding residue" evidence="2">
    <location>
        <position position="247"/>
    </location>
    <ligand>
        <name>heme</name>
        <dbReference type="ChEBI" id="CHEBI:30413"/>
        <label>2</label>
    </ligand>
    <ligandPart>
        <name>Fe</name>
        <dbReference type="ChEBI" id="CHEBI:18248"/>
    </ligandPart>
</feature>
<protein>
    <recommendedName>
        <fullName evidence="6">L-cysteine S-thiosulfotransferase subunit SoxA</fullName>
        <ecNumber evidence="4">2.8.5.2</ecNumber>
    </recommendedName>
    <alternativeName>
        <fullName evidence="2">Cytochrome c551 subunit diheme</fullName>
    </alternativeName>
    <alternativeName>
        <fullName evidence="5">Protein SoxA</fullName>
    </alternativeName>
    <alternativeName>
        <fullName evidence="2 7">SoxAX cytochrome complex subunit A</fullName>
    </alternativeName>
    <alternativeName>
        <fullName evidence="5">Sulfur oxidizing protein A</fullName>
    </alternativeName>
    <alternativeName>
        <fullName evidence="2">Thiosulfate-oxidizing multienzyme system protein SoxA</fullName>
        <shortName evidence="2">TOMES protein SoxA</shortName>
    </alternativeName>
</protein>
<proteinExistence type="evidence at protein level"/>
<organism>
    <name type="scientific">Pseudaminobacter salicylatoxidans</name>
    <dbReference type="NCBI Taxonomy" id="93369"/>
    <lineage>
        <taxon>Bacteria</taxon>
        <taxon>Pseudomonadati</taxon>
        <taxon>Pseudomonadota</taxon>
        <taxon>Alphaproteobacteria</taxon>
        <taxon>Hyphomicrobiales</taxon>
        <taxon>Phyllobacteriaceae</taxon>
        <taxon>Pseudaminobacter</taxon>
    </lineage>
</organism>
<dbReference type="EC" id="2.8.5.2" evidence="4"/>
<dbReference type="EMBL" id="AJ404005">
    <property type="protein sequence ID" value="CAB94219.2"/>
    <property type="molecule type" value="Genomic_DNA"/>
</dbReference>
<dbReference type="SMR" id="Q9K4M4"/>
<dbReference type="STRING" id="1192868.GCA_000304395_02044"/>
<dbReference type="GO" id="GO:0070069">
    <property type="term" value="C:cytochrome complex"/>
    <property type="evidence" value="ECO:0007669"/>
    <property type="project" value="InterPro"/>
</dbReference>
<dbReference type="GO" id="GO:0042597">
    <property type="term" value="C:periplasmic space"/>
    <property type="evidence" value="ECO:0007669"/>
    <property type="project" value="UniProtKB-SubCell"/>
</dbReference>
<dbReference type="GO" id="GO:0009055">
    <property type="term" value="F:electron transfer activity"/>
    <property type="evidence" value="ECO:0000315"/>
    <property type="project" value="UniProtKB"/>
</dbReference>
<dbReference type="GO" id="GO:0020037">
    <property type="term" value="F:heme binding"/>
    <property type="evidence" value="ECO:0007669"/>
    <property type="project" value="InterPro"/>
</dbReference>
<dbReference type="GO" id="GO:0046872">
    <property type="term" value="F:metal ion binding"/>
    <property type="evidence" value="ECO:0007669"/>
    <property type="project" value="UniProtKB-KW"/>
</dbReference>
<dbReference type="GO" id="GO:0016491">
    <property type="term" value="F:oxidoreductase activity"/>
    <property type="evidence" value="ECO:0000315"/>
    <property type="project" value="UniProtKB"/>
</dbReference>
<dbReference type="GO" id="GO:0016669">
    <property type="term" value="F:oxidoreductase activity, acting on a sulfur group of donors, cytochrome as acceptor"/>
    <property type="evidence" value="ECO:0000315"/>
    <property type="project" value="UniProtKB"/>
</dbReference>
<dbReference type="GO" id="GO:0016740">
    <property type="term" value="F:transferase activity"/>
    <property type="evidence" value="ECO:0007669"/>
    <property type="project" value="UniProtKB-KW"/>
</dbReference>
<dbReference type="GO" id="GO:0019417">
    <property type="term" value="P:sulfur oxidation"/>
    <property type="evidence" value="ECO:0000315"/>
    <property type="project" value="UniProtKB"/>
</dbReference>
<dbReference type="FunFam" id="1.10.760.10:FF:000030">
    <property type="entry name" value="L-cysteine S-thiosulfotransferase subunit SoxA"/>
    <property type="match status" value="1"/>
</dbReference>
<dbReference type="Gene3D" id="1.10.760.10">
    <property type="entry name" value="Cytochrome c-like domain"/>
    <property type="match status" value="2"/>
</dbReference>
<dbReference type="InterPro" id="IPR009056">
    <property type="entry name" value="Cyt_c-like_dom"/>
</dbReference>
<dbReference type="InterPro" id="IPR036909">
    <property type="entry name" value="Cyt_c-like_dom_sf"/>
</dbReference>
<dbReference type="InterPro" id="IPR025710">
    <property type="entry name" value="SoxA"/>
</dbReference>
<dbReference type="NCBIfam" id="TIGR04484">
    <property type="entry name" value="thiosulf_SoxA"/>
    <property type="match status" value="1"/>
</dbReference>
<dbReference type="Pfam" id="PF21342">
    <property type="entry name" value="SoxA-TsdA_cyt-c"/>
    <property type="match status" value="2"/>
</dbReference>
<dbReference type="PIRSF" id="PIRSF038455">
    <property type="entry name" value="SoxA"/>
    <property type="match status" value="1"/>
</dbReference>
<dbReference type="SUPFAM" id="SSF46626">
    <property type="entry name" value="Cytochrome c"/>
    <property type="match status" value="2"/>
</dbReference>
<comment type="function">
    <text evidence="1 4">C-type diheme cytochrome, which is part of the SoxAX cytochrome complex involved in sulfur oxidation. The SoxAX complex catalyzes the formation of a heterodisulfide bond between the conserved cysteine residue on a sulfur carrier SoxYZ complex subunit SoxY and thiosulfate or other inorganic sulfur substrates. This leads to the liberation of two electrons, which may be transferred from the SoxAX complex to another cytochrome c that then channels them into the respiratory electron transport chain. Some electrons may be used for reductive CO(2) fixation.</text>
</comment>
<comment type="catalytic activity">
    <reaction evidence="4">
        <text>L-cysteinyl-[SoxY protein] + thiosulfate + 2 Fe(III)-[cytochrome c] = S-sulfosulfanyl-L-cysteinyl-[SoxY protein] + 2 Fe(II)-[cytochrome c] + 2 H(+)</text>
        <dbReference type="Rhea" id="RHEA:56720"/>
        <dbReference type="Rhea" id="RHEA-COMP:10350"/>
        <dbReference type="Rhea" id="RHEA-COMP:14328"/>
        <dbReference type="Rhea" id="RHEA-COMP:14399"/>
        <dbReference type="Rhea" id="RHEA-COMP:14691"/>
        <dbReference type="ChEBI" id="CHEBI:15378"/>
        <dbReference type="ChEBI" id="CHEBI:29033"/>
        <dbReference type="ChEBI" id="CHEBI:29034"/>
        <dbReference type="ChEBI" id="CHEBI:29950"/>
        <dbReference type="ChEBI" id="CHEBI:33542"/>
        <dbReference type="ChEBI" id="CHEBI:139321"/>
        <dbReference type="EC" id="2.8.5.2"/>
    </reaction>
</comment>
<comment type="catalytic activity">
    <reaction evidence="4">
        <text>S-sulfanyl-L-cysteinyl-[SoxY protein] + thiosulfate + 2 Fe(III)-[cytochrome c] = S-(2-sulfodisulfanyl)-L-cysteinyl-[SoxY protein] + 2 Fe(II)-[cytochrome c] + 2 H(+)</text>
        <dbReference type="Rhea" id="RHEA:51224"/>
        <dbReference type="Rhea" id="RHEA-COMP:10350"/>
        <dbReference type="Rhea" id="RHEA-COMP:14399"/>
        <dbReference type="Rhea" id="RHEA-COMP:14689"/>
        <dbReference type="Rhea" id="RHEA-COMP:14690"/>
        <dbReference type="ChEBI" id="CHEBI:15378"/>
        <dbReference type="ChEBI" id="CHEBI:29033"/>
        <dbReference type="ChEBI" id="CHEBI:29034"/>
        <dbReference type="ChEBI" id="CHEBI:33542"/>
        <dbReference type="ChEBI" id="CHEBI:61963"/>
        <dbReference type="ChEBI" id="CHEBI:140664"/>
        <dbReference type="EC" id="2.8.5.2"/>
    </reaction>
</comment>
<comment type="cofactor">
    <cofactor evidence="2">
        <name>heme</name>
        <dbReference type="ChEBI" id="CHEBI:30413"/>
    </cofactor>
    <text evidence="2">Binds 2 heme groups per subunit.</text>
</comment>
<comment type="subunit">
    <text evidence="2">Heterodimer of SoxA and SoxX.</text>
</comment>
<comment type="subcellular location">
    <subcellularLocation>
        <location evidence="2">Periplasm</location>
    </subcellularLocation>
</comment>
<comment type="induction">
    <text evidence="4">By thiosulfate.</text>
</comment>
<comment type="PTM">
    <text evidence="2">Cysteine persulfide at Cys-247.</text>
</comment>
<comment type="disruption phenotype">
    <text evidence="4">Impaired in oxidation of sulfur compounds.</text>
</comment>
<comment type="similarity">
    <text evidence="3">Belongs to the SoxA family.</text>
</comment>
<evidence type="ECO:0000250" key="1">
    <source>
        <dbReference type="UniProtKB" id="D7A6E5"/>
    </source>
</evidence>
<evidence type="ECO:0000250" key="2">
    <source>
        <dbReference type="UniProtKB" id="Q939U1"/>
    </source>
</evidence>
<evidence type="ECO:0000255" key="3"/>
<evidence type="ECO:0000269" key="4">
    <source>
    </source>
</evidence>
<evidence type="ECO:0000303" key="5">
    <source>
    </source>
</evidence>
<evidence type="ECO:0000305" key="6"/>
<evidence type="ECO:0000312" key="7">
    <source>
        <dbReference type="EMBL" id="CAB94219.2"/>
    </source>
</evidence>
<keyword id="KW-0249">Electron transport</keyword>
<keyword id="KW-0349">Heme</keyword>
<keyword id="KW-0408">Iron</keyword>
<keyword id="KW-0479">Metal-binding</keyword>
<keyword id="KW-0574">Periplasm</keyword>
<keyword id="KW-0732">Signal</keyword>
<keyword id="KW-0808">Transferase</keyword>
<keyword id="KW-0813">Transport</keyword>